<organism>
    <name type="scientific">Homo sapiens</name>
    <name type="common">Human</name>
    <dbReference type="NCBI Taxonomy" id="9606"/>
    <lineage>
        <taxon>Eukaryota</taxon>
        <taxon>Metazoa</taxon>
        <taxon>Chordata</taxon>
        <taxon>Craniata</taxon>
        <taxon>Vertebrata</taxon>
        <taxon>Euteleostomi</taxon>
        <taxon>Mammalia</taxon>
        <taxon>Eutheria</taxon>
        <taxon>Euarchontoglires</taxon>
        <taxon>Primates</taxon>
        <taxon>Haplorrhini</taxon>
        <taxon>Catarrhini</taxon>
        <taxon>Hominidae</taxon>
        <taxon>Homo</taxon>
    </lineage>
</organism>
<name>CCR2_HUMAN</name>
<sequence>MLSTSRSRFIRNTNESGEEVTTFFDYDYGAPCHKFDVKQIGAQLLPPLYSLVFIFGFVGNMLVVLILINCKKLKCLTDIYLLNLAISDLLFLITLPLWAHSAANEWVFGNAMCKLFTGLYHIGYFGGIFFIILLTIDRYLAIVHAVFALKARTVTFGVVTSVITWLVAVFASVPGIIFTKCQKEDSVYVCGPYFPRGWNNFHTIMRNILGLVLPLLIMVICYSGILKTLLRCRNEKKRHRAVRVIFTIMIVYFLFWTPYNIVILLNTFQEFFGLSNCESTSQLDQATQVTETLGMTHCCINPIIYAFVGEKFRSLFHIALGCRIAPLQKPVCGGPGVRPGKNVKVTTQGLLDGRGKGKSIGRAPEASLQDKEGA</sequence>
<feature type="chain" id="PRO_0000069232" description="C-C chemokine receptor type 2">
    <location>
        <begin position="1"/>
        <end position="374"/>
    </location>
</feature>
<feature type="topological domain" description="Extracellular" evidence="2">
    <location>
        <begin position="1"/>
        <end position="42"/>
    </location>
</feature>
<feature type="transmembrane region" description="Helical; Name=1" evidence="2">
    <location>
        <begin position="43"/>
        <end position="70"/>
    </location>
</feature>
<feature type="topological domain" description="Cytoplasmic" evidence="2">
    <location>
        <begin position="71"/>
        <end position="80"/>
    </location>
</feature>
<feature type="transmembrane region" description="Helical; Name=2" evidence="2">
    <location>
        <begin position="81"/>
        <end position="100"/>
    </location>
</feature>
<feature type="topological domain" description="Extracellular" evidence="2">
    <location>
        <begin position="101"/>
        <end position="114"/>
    </location>
</feature>
<feature type="transmembrane region" description="Helical; Name=3" evidence="2">
    <location>
        <begin position="115"/>
        <end position="136"/>
    </location>
</feature>
<feature type="topological domain" description="Cytoplasmic" evidence="2">
    <location>
        <begin position="137"/>
        <end position="153"/>
    </location>
</feature>
<feature type="transmembrane region" description="Helical; Name=4" evidence="2">
    <location>
        <begin position="154"/>
        <end position="178"/>
    </location>
</feature>
<feature type="topological domain" description="Extracellular" evidence="2">
    <location>
        <begin position="179"/>
        <end position="206"/>
    </location>
</feature>
<feature type="transmembrane region" description="Helical; Name=5" evidence="2">
    <location>
        <begin position="207"/>
        <end position="226"/>
    </location>
</feature>
<feature type="topological domain" description="Cytoplasmic" evidence="2">
    <location>
        <begin position="227"/>
        <end position="243"/>
    </location>
</feature>
<feature type="transmembrane region" description="Helical; Name=6" evidence="2">
    <location>
        <begin position="244"/>
        <end position="268"/>
    </location>
</feature>
<feature type="topological domain" description="Extracellular" evidence="2">
    <location>
        <begin position="269"/>
        <end position="285"/>
    </location>
</feature>
<feature type="transmembrane region" description="Helical; Name=7" evidence="2">
    <location>
        <begin position="286"/>
        <end position="309"/>
    </location>
</feature>
<feature type="topological domain" description="Cytoplasmic" evidence="2">
    <location>
        <begin position="310"/>
        <end position="374"/>
    </location>
</feature>
<feature type="region of interest" description="Disordered" evidence="4">
    <location>
        <begin position="348"/>
        <end position="374"/>
    </location>
</feature>
<feature type="modified residue" description="Sulfotyrosine" evidence="5">
    <location>
        <position position="26"/>
    </location>
</feature>
<feature type="modified residue" description="Phosphotyrosine; by JAK2" evidence="19">
    <location>
        <position position="139"/>
    </location>
</feature>
<feature type="glycosylation site" description="N-linked (GlcNAc...) asparagine" evidence="2">
    <location>
        <position position="14"/>
    </location>
</feature>
<feature type="disulfide bond" evidence="11">
    <location>
        <begin position="113"/>
        <end position="190"/>
    </location>
</feature>
<feature type="splice variant" id="VSP_001893" description="In isoform B." evidence="22 23">
    <original>SLFHIALGCRIAPLQKPVCGGPGVRPGKNVKVTTQGLLDGRGKGKSIGRAPEASLQDKEGA</original>
    <variation>RYLSVFFRKHITKRFCKQCPVFYRETVDGVTSTNTPSTGEQEVSAGL</variation>
    <location>
        <begin position="314"/>
        <end position="374"/>
    </location>
</feature>
<feature type="sequence variant" id="VAR_020066" description="In dbSNP:rs4987052.">
    <original>L</original>
    <variation>V</variation>
    <location>
        <position position="45"/>
    </location>
</feature>
<feature type="sequence variant" id="VAR_089452" description="In PCLUD; likely pathogenic; loss of CCL2 or CCL13 cytokine-mediated signaling pathway; loss of expression at the cell surface; contrary to wild-type, does not rescue CCL2 cytokine-mediated calcium mobilization and cell migration, when transfected in CCR2-null monocytic THP-1 cells; dbSNP:rs752561542." evidence="12">
    <original>M</original>
    <variation>R</variation>
    <location>
        <position position="61"/>
    </location>
</feature>
<feature type="sequence variant" id="VAR_014339" description="Confers relative resistance to infection by HIV-1; delay in disease progression in African Americans but not in Caucasians; no effect on expression at the cell surface, nor on CCL2 or CCL13 cytokine-mediated signaling pathway; dbSNP:rs1799864." evidence="12 16 18 21">
    <original>V</original>
    <variation>I</variation>
    <location>
        <position position="64"/>
    </location>
</feature>
<feature type="sequence variant" id="VAR_089453" description="In PCLUD; likely pathogenic; loss of CCL2 or CCL13 cytokine-mediated signaling pathway; loss of expression at the cell surface; contrary to wild-type, does not rescue CCL2 or CCL13 cytokine-mediated calcium mobilization and cell migration, when transfected in CCR2-null monocytic THP-1 cells; dbSNP:rs113340633." evidence="12">
    <original>L</original>
    <variation>R</variation>
    <location>
        <position position="119"/>
    </location>
</feature>
<feature type="sequence variant" id="VAR_089454" description="No effect on expression at the cell surface, nor on CCL2 or CCL13 cytokine-mediated signaling pathway; the nucleotide substitution creating this missense variant may lead to abnormally low levels of isoform A at the cell surface, while isoform B levels are similar to the wild-type protein." evidence="12">
    <original>L</original>
    <variation>F</variation>
    <location>
        <position position="133"/>
    </location>
</feature>
<feature type="sequence variant" id="VAR_089455" description="In PCLUD; likely pathogenic; loss of CCL2 or CCL13 cytokine-mediated signaling pathway; loss of expression at the cell surface; contrary to wild-type, does not rescue CCL2 cytokine-mediated calcium mobilization and cell migration, when transfected in CCR2-null monocytic THP-1 cells." evidence="12">
    <location>
        <begin position="214"/>
        <end position="215"/>
    </location>
</feature>
<feature type="sequence variant" id="VAR_089456" description="In PCLUD; likely pathogenic; loss of CCL2 or CCL13 cytokine-mediated signaling pathway; loss of expression at the cell surface; contrary to wild-type, does not rescue CCL2 cytokine-mediated calcium mobilization and cell migration, when transfected in CCR2-null monocytic THP-1 cells." evidence="12">
    <original>T</original>
    <variation>N</variation>
    <location>
        <position position="296"/>
    </location>
</feature>
<feature type="sequence variant" id="VAR_089457" description="No effect on expression at the cell surface, nor on CCL2 or CCL13 cytokine-mediated signaling pathway; dbSNP:rs140816549." evidence="12">
    <original>F</original>
    <variation>L</variation>
    <location>
        <position position="316"/>
    </location>
</feature>
<feature type="sequence variant" id="VAR_089458" description="No effect on expression at the cell surface, nor on CCL2 or CCL13 cytokine-mediated signaling pathway." evidence="12">
    <original>G</original>
    <variation>D</variation>
    <location>
        <position position="355"/>
    </location>
</feature>
<feature type="sequence variant" id="VAR_014340" description="In dbSNP:rs3918387." evidence="21">
    <original>G</original>
    <variation>E</variation>
    <location>
        <position position="355"/>
    </location>
</feature>
<feature type="helix" evidence="25">
    <location>
        <begin position="38"/>
        <end position="69"/>
    </location>
</feature>
<feature type="turn" evidence="26">
    <location>
        <begin position="72"/>
        <end position="74"/>
    </location>
</feature>
<feature type="helix" evidence="25">
    <location>
        <begin position="76"/>
        <end position="92"/>
    </location>
</feature>
<feature type="helix" evidence="25">
    <location>
        <begin position="95"/>
        <end position="103"/>
    </location>
</feature>
<feature type="helix" evidence="25">
    <location>
        <begin position="110"/>
        <end position="142"/>
    </location>
</feature>
<feature type="helix" evidence="25">
    <location>
        <begin position="146"/>
        <end position="151"/>
    </location>
</feature>
<feature type="helix" evidence="25">
    <location>
        <begin position="154"/>
        <end position="170"/>
    </location>
</feature>
<feature type="helix" evidence="25">
    <location>
        <begin position="173"/>
        <end position="177"/>
    </location>
</feature>
<feature type="strand" evidence="25">
    <location>
        <begin position="179"/>
        <end position="184"/>
    </location>
</feature>
<feature type="strand" evidence="25">
    <location>
        <begin position="187"/>
        <end position="192"/>
    </location>
</feature>
<feature type="helix" evidence="25">
    <location>
        <begin position="196"/>
        <end position="210"/>
    </location>
</feature>
<feature type="helix" evidence="25">
    <location>
        <begin position="212"/>
        <end position="228"/>
    </location>
</feature>
<feature type="helix" evidence="25">
    <location>
        <begin position="237"/>
        <end position="265"/>
    </location>
</feature>
<feature type="turn" evidence="25">
    <location>
        <begin position="266"/>
        <end position="268"/>
    </location>
</feature>
<feature type="helix" evidence="25">
    <location>
        <begin position="269"/>
        <end position="272"/>
    </location>
</feature>
<feature type="helix" evidence="25">
    <location>
        <begin position="279"/>
        <end position="295"/>
    </location>
</feature>
<feature type="turn" evidence="25">
    <location>
        <begin position="296"/>
        <end position="300"/>
    </location>
</feature>
<feature type="helix" evidence="25">
    <location>
        <begin position="301"/>
        <end position="308"/>
    </location>
</feature>
<feature type="helix" evidence="25">
    <location>
        <begin position="310"/>
        <end position="318"/>
    </location>
</feature>
<keyword id="KW-0002">3D-structure</keyword>
<keyword id="KW-0025">Alternative splicing</keyword>
<keyword id="KW-1003">Cell membrane</keyword>
<keyword id="KW-0225">Disease variant</keyword>
<keyword id="KW-1015">Disulfide bond</keyword>
<keyword id="KW-0297">G-protein coupled receptor</keyword>
<keyword id="KW-0325">Glycoprotein</keyword>
<keyword id="KW-0945">Host-virus interaction</keyword>
<keyword id="KW-0395">Inflammatory response</keyword>
<keyword id="KW-0472">Membrane</keyword>
<keyword id="KW-0597">Phosphoprotein</keyword>
<keyword id="KW-1267">Proteomics identification</keyword>
<keyword id="KW-0675">Receptor</keyword>
<keyword id="KW-1185">Reference proteome</keyword>
<keyword id="KW-0765">Sulfation</keyword>
<keyword id="KW-0807">Transducer</keyword>
<keyword id="KW-0812">Transmembrane</keyword>
<keyword id="KW-1133">Transmembrane helix</keyword>
<comment type="function">
    <text evidence="1 8 9 12 13 14 24">Key functional receptor for CCL2 but can also bind CCL7, and CCL12 (PubMed:23408426, PubMed:38157855, PubMed:8048929, PubMed:8146186). Also transduces signaling mediated by CCL13 (PubMed:38157855). Its binding with CCL2 on monocytes and macrophages mediates chemotaxis and migration induction through the activation of the PI3K cascade, the small G protein Rac and lamellipodium protrusion (PubMed:38157855). Also acts as a receptor for the beta-defensin DEFB106A/DEFB106B (PubMed:23938203). Regulates the expression of T-cell inflammatory cytokines and T-cell differentiation, promoting the differentiation of T-cells into T-helper 17 cells (Th17) during inflammation (By similarity). Facilitates the export of mature thymocytes by enhancing directional movement of thymocytes to sphingosine-1-phosphate stimulation and up-regulation of S1P1R expression; signals through the JAK-STAT pathway to regulate FOXO1 activity leading to an increased expression of S1P1R (By similarity). Plays an important role in mediating peripheral nerve injury-induced neuropathic pain (By similarity). Increases NMDA-mediated synaptic transmission in both dopamine D1 and D2 receptor-containing neurons, which may be caused by MAPK/ERK-dependent phosphorylation of GRIN2B/NMDAR2B (By similarity). Mediates the recruitment of macrophages and monocytes to the injury site following brain injury (By similarity).</text>
</comment>
<comment type="function">
    <text evidence="20">(Microbial infection) Alternative coreceptor with CD4 for HIV-1 infection.</text>
</comment>
<comment type="subunit">
    <text evidence="6 9 10 17">Interacts with ARRB1 (PubMed:9501202). Interacts (via extracellular N-terminal region) with beta-defensin DEFB106A/DEFB106B; this interaction may preferentially require specific tyrosine sulfation on CCR2 (PubMed:23938203). Interacts with NUP85; the interaction is required for CCR2 clusters formation on the cell membrane and CCR2 signaling (PubMed:15995708, PubMed:25283965).</text>
</comment>
<comment type="subunit">
    <text evidence="20">(Microbial infection) Binds to HIV-1 Tat.</text>
</comment>
<comment type="interaction">
    <interactant intactId="EBI-16580134">
        <id>P41597</id>
    </interactant>
    <interactant intactId="EBI-4289913">
        <id>Q6S8J3</id>
        <label>POTEE</label>
    </interactant>
    <organismsDiffer>false</organismsDiffer>
    <experiments>2</experiments>
</comment>
<comment type="interaction">
    <interactant intactId="EBI-14807859">
        <id>P41597-2</id>
    </interactant>
    <interactant intactId="EBI-716392">
        <id>Q9BW27</id>
        <label>NUP85</label>
    </interactant>
    <organismsDiffer>false</organismsDiffer>
    <experiments>3</experiments>
</comment>
<comment type="subcellular location">
    <subcellularLocation>
        <location evidence="6 7 12">Cell membrane</location>
        <topology evidence="2">Multi-pass membrane protein</topology>
    </subcellularLocation>
    <text evidence="6">The chemoattractant receptors are distributed throughout the cell surface; after stimulation with a ligand, such as CCL2, they are rapidly recruited into microdomain clusters at the cell membrane.</text>
</comment>
<comment type="alternative products">
    <event type="alternative splicing"/>
    <isoform>
        <id>P41597-1</id>
        <name evidence="23">A</name>
        <sequence type="displayed"/>
    </isoform>
    <isoform>
        <id>P41597-2</id>
        <name evidence="23">B</name>
        <sequence type="described" ref="VSP_001893"/>
    </isoform>
</comment>
<comment type="tissue specificity">
    <text evidence="12 15">Expressed by monocytes and IL2-activated NK cells (PubMed:9058802). Abundantly expressed on CD14+/CD16- monocytes and weakly on CD14+/CD16+ monocytes, type 2 dendritic cells (DCs) and plasmacytoid DCs (at protein level) (PubMed:38157855).</text>
</comment>
<comment type="induction">
    <text evidence="7 15">Up-regulated by CREB3 (PubMed:18587271). In NK cells, induced by IL2 (PubMed:9058802).</text>
</comment>
<comment type="PTM">
    <text evidence="5">N-glycosylated.</text>
</comment>
<comment type="PTM">
    <text evidence="5 8">Sulfation increases the affinity for both monomeric and dimeric CCL2 with stronger binding to the monomeric form (PubMed:11046064, PubMed:23408426). Binding of sulfated CCR2 to CCL2 promotes conversion of CCL2 from dimer to monomer (PubMed:11046064, PubMed:23408426).</text>
</comment>
<comment type="polymorphism">
    <text evidence="16">Variations in CCR2 are associated with relative resistance to immunodeficiency virus type 1 (resistance to HIV-1) [MIM:609423].</text>
</comment>
<comment type="disease" evidence="12">
    <disease id="DI-06872">
        <name>Polycystic lung disease</name>
        <acronym>PCLUD</acronym>
        <description>An autosomal recessive disease characterized by pulmonary alveolar proteinosis, marked peribronchovascular and parenchymal lymphocytosis, peribronchiolar pulmonary fibrosis, progressive diffuse parenchymal lung cyst formation and enlargement, progressive obstructive airflow limitation, and recurrent secondary infections. Additional features may include digital clubbing, allergies, and atopic dermatitis.</description>
        <dbReference type="MIM" id="219600"/>
    </disease>
    <text>The disease is caused by variants affecting the gene represented in this entry.</text>
</comment>
<comment type="miscellaneous">
    <molecule>Isoform B</molecule>
    <text evidence="11">Mutagenesis of Leu-316 to Thr as well as Phe-320 to Asp decrease interaction with NUP85.</text>
</comment>
<comment type="similarity">
    <text evidence="3">Belongs to the G-protein coupled receptor 1 family.</text>
</comment>
<comment type="online information" name="Wikipedia">
    <link uri="https://en.wikipedia.org/wiki/CC_chemokine_receptors"/>
    <text>CC chemokine receptors entry</text>
</comment>
<comment type="online information" name="Atlas of Genetics and Cytogenetics in Oncology and Haematology">
    <link uri="https://atlasgeneticsoncology.org/gene/964/CCR2"/>
</comment>
<accession>P41597</accession>
<accession>A0AVQ3</accession>
<accession>B2RMT0</accession>
<accession>O95950</accession>
<accession>Q4VBL2</accession>
<gene>
    <name type="primary">CCR2</name>
    <name type="synonym">CMKBR2</name>
</gene>
<proteinExistence type="evidence at protein level"/>
<protein>
    <recommendedName>
        <fullName>C-C chemokine receptor type 2</fullName>
        <shortName>C-C CKR-2</shortName>
        <shortName>CC-CKR-2</shortName>
        <shortName>CCR-2</shortName>
        <shortName>CCR2</shortName>
    </recommendedName>
    <alternativeName>
        <fullName>Monocyte chemoattractant protein 1 receptor</fullName>
        <shortName>MCP-1-R</shortName>
    </alternativeName>
    <cdAntigenName>CD192</cdAntigenName>
</protein>
<reference key="1">
    <citation type="journal article" date="1994" name="Proc. Natl. Acad. Sci. U.S.A.">
        <title>Molecular cloning and functional expression of two monocyte chemoattractant protein 1 receptors reveals alternative splicing of the carboxyl-terminal tails.</title>
        <authorList>
            <person name="Charo I.F."/>
            <person name="Myers S.J."/>
            <person name="Herman A."/>
            <person name="Franci C."/>
            <person name="Connolly A.J."/>
            <person name="Coughlin S.R."/>
        </authorList>
    </citation>
    <scope>NUCLEOTIDE SEQUENCE [MRNA]</scope>
    <scope>FUNCTION</scope>
</reference>
<reference key="2">
    <citation type="journal article" date="1994" name="Biochem. Biophys. Res. Commun.">
        <title>cDNA cloning and functional expression of a human monocyte chemoattractant protein 1 receptor.</title>
        <authorList>
            <person name="Yamagami S."/>
            <person name="Tokuda Y."/>
            <person name="Ishii K."/>
            <person name="Tamaka H."/>
            <person name="Endo N."/>
        </authorList>
    </citation>
    <scope>NUCLEOTIDE SEQUENCE [MRNA]</scope>
    <scope>FUNCTION</scope>
</reference>
<reference key="3">
    <citation type="journal article" date="1997" name="J. Biol. Chem.">
        <title>Organization and differential expression of the human monocyte chemoattractant protein 1 receptor gene. Evidence for the role of the carboxyl-terminal tail in receptor trafficking.</title>
        <authorList>
            <person name="Wong L.-M."/>
            <person name="Myers S.J."/>
            <person name="Tsou C.-L."/>
            <person name="Gosling J."/>
            <person name="Arai H."/>
            <person name="Charo I.F."/>
        </authorList>
    </citation>
    <scope>NUCLEOTIDE SEQUENCE [GENOMIC DNA]</scope>
</reference>
<reference key="4">
    <citation type="submission" date="2002-09" db="EMBL/GenBank/DDBJ databases">
        <authorList>
            <consortium name="SeattleSNPs variation discovery resource"/>
        </authorList>
    </citation>
    <scope>NUCLEOTIDE SEQUENCE [GENOMIC DNA]</scope>
    <scope>VARIANTS ILE-64 AND GLU-355</scope>
</reference>
<reference key="5">
    <citation type="journal article" date="2004" name="Nat. Genet.">
        <title>Complete sequencing and characterization of 21,243 full-length human cDNAs.</title>
        <authorList>
            <person name="Ota T."/>
            <person name="Suzuki Y."/>
            <person name="Nishikawa T."/>
            <person name="Otsuki T."/>
            <person name="Sugiyama T."/>
            <person name="Irie R."/>
            <person name="Wakamatsu A."/>
            <person name="Hayashi K."/>
            <person name="Sato H."/>
            <person name="Nagai K."/>
            <person name="Kimura K."/>
            <person name="Makita H."/>
            <person name="Sekine M."/>
            <person name="Obayashi M."/>
            <person name="Nishi T."/>
            <person name="Shibahara T."/>
            <person name="Tanaka T."/>
            <person name="Ishii S."/>
            <person name="Yamamoto J."/>
            <person name="Saito K."/>
            <person name="Kawai Y."/>
            <person name="Isono Y."/>
            <person name="Nakamura Y."/>
            <person name="Nagahari K."/>
            <person name="Murakami K."/>
            <person name="Yasuda T."/>
            <person name="Iwayanagi T."/>
            <person name="Wagatsuma M."/>
            <person name="Shiratori A."/>
            <person name="Sudo H."/>
            <person name="Hosoiri T."/>
            <person name="Kaku Y."/>
            <person name="Kodaira H."/>
            <person name="Kondo H."/>
            <person name="Sugawara M."/>
            <person name="Takahashi M."/>
            <person name="Kanda K."/>
            <person name="Yokoi T."/>
            <person name="Furuya T."/>
            <person name="Kikkawa E."/>
            <person name="Omura Y."/>
            <person name="Abe K."/>
            <person name="Kamihara K."/>
            <person name="Katsuta N."/>
            <person name="Sato K."/>
            <person name="Tanikawa M."/>
            <person name="Yamazaki M."/>
            <person name="Ninomiya K."/>
            <person name="Ishibashi T."/>
            <person name="Yamashita H."/>
            <person name="Murakawa K."/>
            <person name="Fujimori K."/>
            <person name="Tanai H."/>
            <person name="Kimata M."/>
            <person name="Watanabe M."/>
            <person name="Hiraoka S."/>
            <person name="Chiba Y."/>
            <person name="Ishida S."/>
            <person name="Ono Y."/>
            <person name="Takiguchi S."/>
            <person name="Watanabe S."/>
            <person name="Yosida M."/>
            <person name="Hotuta T."/>
            <person name="Kusano J."/>
            <person name="Kanehori K."/>
            <person name="Takahashi-Fujii A."/>
            <person name="Hara H."/>
            <person name="Tanase T.-O."/>
            <person name="Nomura Y."/>
            <person name="Togiya S."/>
            <person name="Komai F."/>
            <person name="Hara R."/>
            <person name="Takeuchi K."/>
            <person name="Arita M."/>
            <person name="Imose N."/>
            <person name="Musashino K."/>
            <person name="Yuuki H."/>
            <person name="Oshima A."/>
            <person name="Sasaki N."/>
            <person name="Aotsuka S."/>
            <person name="Yoshikawa Y."/>
            <person name="Matsunawa H."/>
            <person name="Ichihara T."/>
            <person name="Shiohata N."/>
            <person name="Sano S."/>
            <person name="Moriya S."/>
            <person name="Momiyama H."/>
            <person name="Satoh N."/>
            <person name="Takami S."/>
            <person name="Terashima Y."/>
            <person name="Suzuki O."/>
            <person name="Nakagawa S."/>
            <person name="Senoh A."/>
            <person name="Mizoguchi H."/>
            <person name="Goto Y."/>
            <person name="Shimizu F."/>
            <person name="Wakebe H."/>
            <person name="Hishigaki H."/>
            <person name="Watanabe T."/>
            <person name="Sugiyama A."/>
            <person name="Takemoto M."/>
            <person name="Kawakami B."/>
            <person name="Yamazaki M."/>
            <person name="Watanabe K."/>
            <person name="Kumagai A."/>
            <person name="Itakura S."/>
            <person name="Fukuzumi Y."/>
            <person name="Fujimori Y."/>
            <person name="Komiyama M."/>
            <person name="Tashiro H."/>
            <person name="Tanigami A."/>
            <person name="Fujiwara T."/>
            <person name="Ono T."/>
            <person name="Yamada K."/>
            <person name="Fujii Y."/>
            <person name="Ozaki K."/>
            <person name="Hirao M."/>
            <person name="Ohmori Y."/>
            <person name="Kawabata A."/>
            <person name="Hikiji T."/>
            <person name="Kobatake N."/>
            <person name="Inagaki H."/>
            <person name="Ikema Y."/>
            <person name="Okamoto S."/>
            <person name="Okitani R."/>
            <person name="Kawakami T."/>
            <person name="Noguchi S."/>
            <person name="Itoh T."/>
            <person name="Shigeta K."/>
            <person name="Senba T."/>
            <person name="Matsumura K."/>
            <person name="Nakajima Y."/>
            <person name="Mizuno T."/>
            <person name="Morinaga M."/>
            <person name="Sasaki M."/>
            <person name="Togashi T."/>
            <person name="Oyama M."/>
            <person name="Hata H."/>
            <person name="Watanabe M."/>
            <person name="Komatsu T."/>
            <person name="Mizushima-Sugano J."/>
            <person name="Satoh T."/>
            <person name="Shirai Y."/>
            <person name="Takahashi Y."/>
            <person name="Nakagawa K."/>
            <person name="Okumura K."/>
            <person name="Nagase T."/>
            <person name="Nomura N."/>
            <person name="Kikuchi H."/>
            <person name="Masuho Y."/>
            <person name="Yamashita R."/>
            <person name="Nakai K."/>
            <person name="Yada T."/>
            <person name="Nakamura Y."/>
            <person name="Ohara O."/>
            <person name="Isogai T."/>
            <person name="Sugano S."/>
        </authorList>
    </citation>
    <scope>NUCLEOTIDE SEQUENCE [LARGE SCALE MRNA]</scope>
    <source>
        <tissue>Thymus</tissue>
        <tissue>Trachea</tissue>
    </source>
</reference>
<reference key="6">
    <citation type="journal article" date="2006" name="Nature">
        <title>The DNA sequence, annotation and analysis of human chromosome 3.</title>
        <authorList>
            <person name="Muzny D.M."/>
            <person name="Scherer S.E."/>
            <person name="Kaul R."/>
            <person name="Wang J."/>
            <person name="Yu J."/>
            <person name="Sudbrak R."/>
            <person name="Buhay C.J."/>
            <person name="Chen R."/>
            <person name="Cree A."/>
            <person name="Ding Y."/>
            <person name="Dugan-Rocha S."/>
            <person name="Gill R."/>
            <person name="Gunaratne P."/>
            <person name="Harris R.A."/>
            <person name="Hawes A.C."/>
            <person name="Hernandez J."/>
            <person name="Hodgson A.V."/>
            <person name="Hume J."/>
            <person name="Jackson A."/>
            <person name="Khan Z.M."/>
            <person name="Kovar-Smith C."/>
            <person name="Lewis L.R."/>
            <person name="Lozado R.J."/>
            <person name="Metzker M.L."/>
            <person name="Milosavljevic A."/>
            <person name="Miner G.R."/>
            <person name="Morgan M.B."/>
            <person name="Nazareth L.V."/>
            <person name="Scott G."/>
            <person name="Sodergren E."/>
            <person name="Song X.-Z."/>
            <person name="Steffen D."/>
            <person name="Wei S."/>
            <person name="Wheeler D.A."/>
            <person name="Wright M.W."/>
            <person name="Worley K.C."/>
            <person name="Yuan Y."/>
            <person name="Zhang Z."/>
            <person name="Adams C.Q."/>
            <person name="Ansari-Lari M.A."/>
            <person name="Ayele M."/>
            <person name="Brown M.J."/>
            <person name="Chen G."/>
            <person name="Chen Z."/>
            <person name="Clendenning J."/>
            <person name="Clerc-Blankenburg K.P."/>
            <person name="Chen R."/>
            <person name="Chen Z."/>
            <person name="Davis C."/>
            <person name="Delgado O."/>
            <person name="Dinh H.H."/>
            <person name="Dong W."/>
            <person name="Draper H."/>
            <person name="Ernst S."/>
            <person name="Fu G."/>
            <person name="Gonzalez-Garay M.L."/>
            <person name="Garcia D.K."/>
            <person name="Gillett W."/>
            <person name="Gu J."/>
            <person name="Hao B."/>
            <person name="Haugen E."/>
            <person name="Havlak P."/>
            <person name="He X."/>
            <person name="Hennig S."/>
            <person name="Hu S."/>
            <person name="Huang W."/>
            <person name="Jackson L.R."/>
            <person name="Jacob L.S."/>
            <person name="Kelly S.H."/>
            <person name="Kube M."/>
            <person name="Levy R."/>
            <person name="Li Z."/>
            <person name="Liu B."/>
            <person name="Liu J."/>
            <person name="Liu W."/>
            <person name="Lu J."/>
            <person name="Maheshwari M."/>
            <person name="Nguyen B.-V."/>
            <person name="Okwuonu G.O."/>
            <person name="Palmeiri A."/>
            <person name="Pasternak S."/>
            <person name="Perez L.M."/>
            <person name="Phelps K.A."/>
            <person name="Plopper F.J."/>
            <person name="Qiang B."/>
            <person name="Raymond C."/>
            <person name="Rodriguez R."/>
            <person name="Saenphimmachak C."/>
            <person name="Santibanez J."/>
            <person name="Shen H."/>
            <person name="Shen Y."/>
            <person name="Subramanian S."/>
            <person name="Tabor P.E."/>
            <person name="Verduzco D."/>
            <person name="Waldron L."/>
            <person name="Wang J."/>
            <person name="Wang J."/>
            <person name="Wang Q."/>
            <person name="Williams G.A."/>
            <person name="Wong G.K.-S."/>
            <person name="Yao Z."/>
            <person name="Zhang J."/>
            <person name="Zhang X."/>
            <person name="Zhao G."/>
            <person name="Zhou J."/>
            <person name="Zhou Y."/>
            <person name="Nelson D."/>
            <person name="Lehrach H."/>
            <person name="Reinhardt R."/>
            <person name="Naylor S.L."/>
            <person name="Yang H."/>
            <person name="Olson M."/>
            <person name="Weinstock G."/>
            <person name="Gibbs R.A."/>
        </authorList>
    </citation>
    <scope>NUCLEOTIDE SEQUENCE [LARGE SCALE GENOMIC DNA]</scope>
</reference>
<reference key="7">
    <citation type="submission" date="2005-07" db="EMBL/GenBank/DDBJ databases">
        <authorList>
            <person name="Mural R.J."/>
            <person name="Istrail S."/>
            <person name="Sutton G."/>
            <person name="Florea L."/>
            <person name="Halpern A.L."/>
            <person name="Mobarry C.M."/>
            <person name="Lippert R."/>
            <person name="Walenz B."/>
            <person name="Shatkay H."/>
            <person name="Dew I."/>
            <person name="Miller J.R."/>
            <person name="Flanigan M.J."/>
            <person name="Edwards N.J."/>
            <person name="Bolanos R."/>
            <person name="Fasulo D."/>
            <person name="Halldorsson B.V."/>
            <person name="Hannenhalli S."/>
            <person name="Turner R."/>
            <person name="Yooseph S."/>
            <person name="Lu F."/>
            <person name="Nusskern D.R."/>
            <person name="Shue B.C."/>
            <person name="Zheng X.H."/>
            <person name="Zhong F."/>
            <person name="Delcher A.L."/>
            <person name="Huson D.H."/>
            <person name="Kravitz S.A."/>
            <person name="Mouchard L."/>
            <person name="Reinert K."/>
            <person name="Remington K.A."/>
            <person name="Clark A.G."/>
            <person name="Waterman M.S."/>
            <person name="Eichler E.E."/>
            <person name="Adams M.D."/>
            <person name="Hunkapiller M.W."/>
            <person name="Myers E.W."/>
            <person name="Venter J.C."/>
        </authorList>
    </citation>
    <scope>NUCLEOTIDE SEQUENCE [LARGE SCALE GENOMIC DNA]</scope>
</reference>
<reference key="8">
    <citation type="journal article" date="2004" name="Genome Res.">
        <title>The status, quality, and expansion of the NIH full-length cDNA project: the Mammalian Gene Collection (MGC).</title>
        <authorList>
            <consortium name="The MGC Project Team"/>
        </authorList>
    </citation>
    <scope>NUCLEOTIDE SEQUENCE [LARGE SCALE MRNA] (ISOFORMS A AND B)</scope>
</reference>
<reference key="9">
    <citation type="journal article" date="1997" name="J. Immunol.">
        <title>IL-2-Regulated Expression of the Monocyte Chemotactic Protein-1 Receptor (CCR2) in Human NK Cells.</title>
        <authorList>
            <person name="Polentarutti N."/>
            <person name="Allavena P."/>
            <person name="Bianchi G."/>
            <person name="Giardina G."/>
            <person name="Basile A."/>
            <person name="Sozzani S."/>
            <person name="Mantovani A."/>
            <person name="Introna M."/>
        </authorList>
    </citation>
    <scope>NUCLEOTIDE SEQUENCE [MRNA] OF 221-374 (ISOFORM B)</scope>
    <scope>ALTERNATIVE SPLICING</scope>
    <scope>TISSUE SPECIFICITY</scope>
    <scope>INDUCTION BY IL2</scope>
</reference>
<reference key="10">
    <citation type="journal article" date="1998" name="J. Immunol.">
        <title>The chemokine monocyte chemotactic protein 1 triggers Janus kinase 2 activation and tyrosine phosphorylation of the CCR2B receptor.</title>
        <authorList>
            <person name="Mellado M."/>
            <person name="Rodriguez-Frade J.M."/>
            <person name="Aragay A."/>
            <person name="del Real G."/>
            <person name="Martin A.M."/>
            <person name="Vila-Coro A.J."/>
            <person name="Serrano A."/>
            <person name="Mayor F. Jr."/>
            <person name="Martinez-A C."/>
        </authorList>
    </citation>
    <scope>PHOSPHORYLATION AT TYR-139 BY JAK2</scope>
</reference>
<reference key="11">
    <citation type="journal article" date="1998" name="Proc. Natl. Acad. Sci. U.S.A.">
        <title>Monocyte chemoattractant protein-1-induced CCR2B receptor desensitization mediated by the G protein-coupled receptor kinase 2.</title>
        <authorList>
            <person name="Aragay A.M."/>
            <person name="Mellado M."/>
            <person name="Frade J.M."/>
            <person name="Martin A.M."/>
            <person name="Jimenez-Sainz M.C."/>
            <person name="Martinez-A C."/>
            <person name="Mayor F. Jr."/>
        </authorList>
    </citation>
    <scope>INTERACTION WITH ARRB1</scope>
</reference>
<reference key="12">
    <citation type="journal article" date="1998" name="Proc. Natl. Acad. Sci. U.S.A.">
        <title>HIV-1 Tat protein mimicry of chemokines.</title>
        <authorList>
            <person name="Albini A."/>
            <person name="Ferrini S."/>
            <person name="Benelli R."/>
            <person name="Sforzini S."/>
            <person name="Giunciuglio D."/>
            <person name="Aluigi M.G."/>
            <person name="Proudfoot A.E.I."/>
            <person name="Alouani S."/>
            <person name="Wells T.N.C."/>
            <person name="Mariani G."/>
            <person name="Rabin R.L."/>
            <person name="Farber J.M."/>
            <person name="Noonan D.M."/>
        </authorList>
    </citation>
    <scope>FUNCTION (MICROBIAL INFECTION)</scope>
    <scope>INTERACTION WITH HIV-1 TAT (MICROBIAL INFECTION)</scope>
</reference>
<reference key="13">
    <citation type="journal article" date="2000" name="J. Immunol.">
        <title>Monocyte chemotactic protein-1 receptor CCR2B is a glycoprotein that has tyrosine sulfation in a conserved extracellular N-terminal region.</title>
        <authorList>
            <person name="Preobrazhensky A.A."/>
            <person name="Dragan S."/>
            <person name="Kawano T."/>
            <person name="Gavrilin M.A."/>
            <person name="Gulina I.V."/>
            <person name="Chakravarty L."/>
            <person name="Kolattukudy P.E."/>
        </authorList>
    </citation>
    <scope>SULFATION AT TYR-26</scope>
    <scope>GLYCOSYLATION</scope>
</reference>
<reference key="14">
    <citation type="journal article" date="2005" name="Nat. Immunol.">
        <title>Pivotal function for cytoplasmic protein FROUNT in CCR2-mediated monocyte chemotaxis.</title>
        <authorList>
            <person name="Terashima Y."/>
            <person name="Onai N."/>
            <person name="Murai M."/>
            <person name="Enomoto M."/>
            <person name="Poonpiriya V."/>
            <person name="Hamada T."/>
            <person name="Motomura K."/>
            <person name="Suwa M."/>
            <person name="Ezaki T."/>
            <person name="Haga T."/>
            <person name="Kanegasaki S."/>
            <person name="Matsushima K."/>
        </authorList>
    </citation>
    <scope>FUNCTION</scope>
    <scope>INTERACTION WITH NUP85</scope>
    <scope>SUBCELLULAR LOCATION</scope>
</reference>
<reference key="15">
    <citation type="journal article" date="2008" name="Exp. Mol. Med.">
        <title>Human LZIP induces monocyte CC chemokine receptor 2 expression leading to enhancement of monocyte chemoattractant protein 1/CCL2-induced cell migration.</title>
        <authorList>
            <person name="Sung H.J."/>
            <person name="Kim Y.S."/>
            <person name="Kang H."/>
            <person name="Ko J."/>
        </authorList>
    </citation>
    <scope>SUBCELLULAR LOCATION</scope>
    <scope>INDUCTION</scope>
</reference>
<reference key="16">
    <citation type="journal article" date="2013" name="J. Biol. Chem.">
        <title>Tyrosine sulfation of chemokine receptor CCR2 enhances interactions with both monomeric and dimeric forms of the chemokine monocyte chemoattractant protein-1 (MCP-1).</title>
        <authorList>
            <person name="Tan J.H."/>
            <person name="Ludeman J.P."/>
            <person name="Wedderburn J."/>
            <person name="Canals M."/>
            <person name="Hall P."/>
            <person name="Butler S.J."/>
            <person name="Taleski D."/>
            <person name="Christopoulos A."/>
            <person name="Hickey M.J."/>
            <person name="Payne R.J."/>
            <person name="Stone M.J."/>
        </authorList>
    </citation>
    <scope>FUNCTION</scope>
    <scope>SULFATION</scope>
</reference>
<reference key="17">
    <citation type="journal article" date="2013" name="J. Mol. Biol.">
        <title>Structural basis for the interaction of human beta-defensin 6 and its putative chemokine receptor CCR2 and breast cancer microvesicles.</title>
        <authorList>
            <person name="De Paula V.S."/>
            <person name="Gomes N.S."/>
            <person name="Lima L.G."/>
            <person name="Miyamoto C.A."/>
            <person name="Monteiro R.Q."/>
            <person name="Almeida F.C."/>
            <person name="Valente A.P."/>
        </authorList>
    </citation>
    <scope>FUNCTION</scope>
    <scope>SUBCELLULAR LOCATION</scope>
    <scope>INTERACTION WITH BETA-DEFENSIN DEFB106A/DEFB106B</scope>
</reference>
<reference key="18">
    <citation type="journal article" date="2014" name="FEBS J.">
        <title>Structural basis for the binding of the membrane-proximal C-terminal region of chemokine receptor CCR2 with the cytosolic regulator FROUNT.</title>
        <authorList>
            <person name="Esaki K."/>
            <person name="Yoshinaga S."/>
            <person name="Tsuji T."/>
            <person name="Toda E."/>
            <person name="Terashima Y."/>
            <person name="Saitoh T."/>
            <person name="Kohda D."/>
            <person name="Kohno T."/>
            <person name="Osawa M."/>
            <person name="Ueda T."/>
            <person name="Shimada I."/>
            <person name="Matsushima K."/>
            <person name="Terasawa H."/>
        </authorList>
    </citation>
    <scope>STRUCTURE BY NMR OF 310-325 (ISOFORM B)</scope>
    <scope>INTERACTION WITH NUP85</scope>
    <scope>MUTAGENESIS OF ISOFORM B</scope>
</reference>
<reference key="19">
    <citation type="journal article" date="2016" name="Nature">
        <title>Structure of CC chemokine receptor 2 with orthosteric and allosteric antagonists.</title>
        <authorList>
            <person name="Zheng Y."/>
            <person name="Qin L."/>
            <person name="Zacarias N.V."/>
            <person name="de Vries H."/>
            <person name="Han G.W."/>
            <person name="Gustavsson M."/>
            <person name="Dabros M."/>
            <person name="Zhao C."/>
            <person name="Cherney R.J."/>
            <person name="Carter P."/>
            <person name="Stamos D."/>
            <person name="Abagyan R."/>
            <person name="Cherezov V."/>
            <person name="Stevens R.C."/>
            <person name="Ijzerman A.P."/>
            <person name="Heitman L.H."/>
            <person name="Tebben A."/>
            <person name="Kufareva I."/>
            <person name="Handel T.M."/>
        </authorList>
    </citation>
    <scope>X-RAY CRYSTALLOGRAPHY (2.81 ANGSTROMS) OF 2-328 (ISOFORM B)</scope>
    <scope>DISULFIDE BOND</scope>
</reference>
<reference key="20">
    <citation type="journal article" date="1997" name="Science">
        <title>Contrasting genetic influence of CCR2 and CCR5 variants on HIV-1 infection and disease progression.</title>
        <authorList>
            <person name="Smith M.W."/>
            <person name="Dean M."/>
            <person name="Carrington M."/>
            <person name="Winkler C."/>
            <person name="Huttley G.A."/>
            <person name="Lomb D.A."/>
            <person name="Goedert J.J."/>
            <person name="O'Brien T.R."/>
            <person name="Jacobson L.P."/>
            <person name="Kaslow R."/>
            <person name="Buchbinder S."/>
            <person name="Vittinghoff E."/>
            <person name="Vlahov D."/>
            <person name="Hoots K."/>
            <person name="Hilgartner M.W."/>
            <person name="O'Brien S.J."/>
        </authorList>
    </citation>
    <scope>VARIANT ILE-64</scope>
</reference>
<reference key="21">
    <citation type="journal article" date="1998" name="Nat. Med.">
        <title>Genealogy of the CCR5 locus and chemokine system gene variants associated with altered rates of HIV-1 disease progression.</title>
        <authorList>
            <person name="Mummidi S."/>
            <person name="Ahuja S.S."/>
            <person name="Gonzalez E."/>
            <person name="Anderson S.A."/>
            <person name="Santiago E.N."/>
            <person name="Stephan K.T."/>
            <person name="Craig F.E."/>
            <person name="O'Connell P."/>
            <person name="Tryon V."/>
            <person name="Clark R.A."/>
            <person name="Dolan M.J."/>
            <person name="Ahuja S.K."/>
        </authorList>
    </citation>
    <scope>VARIANT ILE-64</scope>
</reference>
<reference key="22">
    <citation type="journal article" date="2024" name="Cell">
        <title>Human inherited CCR2 deficiency underlies progressive polycystic lung disease.</title>
        <authorList>
            <person name="Neehus A.L."/>
            <person name="Carey B."/>
            <person name="Landekic M."/>
            <person name="Panikulam P."/>
            <person name="Deutsch G."/>
            <person name="Ogishi M."/>
            <person name="Arango-Franco C.A."/>
            <person name="Philippot Q."/>
            <person name="Modaresi M."/>
            <person name="Mohammadzadeh I."/>
            <person name="Corcini Berndt M."/>
            <person name="Rinchai D."/>
            <person name="Le Voyer T."/>
            <person name="Rosain J."/>
            <person name="Momenilandi M."/>
            <person name="Martin-Fernandez M."/>
            <person name="Khan T."/>
            <person name="Bohlen J."/>
            <person name="Han J.E."/>
            <person name="Deslys A."/>
            <person name="Bernard M."/>
            <person name="Gajardo-Carrasco T."/>
            <person name="Soudee C."/>
            <person name="Le Floc'h C."/>
            <person name="Migaud M."/>
            <person name="Seeleuthner Y."/>
            <person name="Jang M.S."/>
            <person name="Nikolouli E."/>
            <person name="Seyedpour S."/>
            <person name="Begueret H."/>
            <person name="Emile J.F."/>
            <person name="Le Guen P."/>
            <person name="Tavazzi G."/>
            <person name="Colombo C.N.J."/>
            <person name="Marzani F.C."/>
            <person name="Angelini M."/>
            <person name="Trespidi F."/>
            <person name="Ghirardello S."/>
            <person name="Alipour N."/>
            <person name="Molitor A."/>
            <person name="Carapito R."/>
            <person name="Mazloomrezaei M."/>
            <person name="Rokni-Zadeh H."/>
            <person name="Changi-Ashtiani M."/>
            <person name="Brouzes C."/>
            <person name="Vargas P."/>
            <person name="Borghesi A."/>
            <person name="Lachmann N."/>
            <person name="Bahram S."/>
            <person name="Crestani B."/>
            <person name="Pahari S."/>
            <person name="Schlesinger L.S."/>
            <person name="Marr N."/>
            <person name="Bugonovic D."/>
            <person name="Boisson-Dupuis S."/>
            <person name="Beziat V."/>
            <person name="Abel L."/>
            <person name="Borie R."/>
            <person name="Young L.R."/>
            <person name="Deterding R."/>
            <person name="Shahrooei M."/>
            <person name="Rezaei N."/>
            <person name="Parvaneh N."/>
            <person name="Craven D."/>
            <person name="Gros P."/>
            <person name="Malo D."/>
            <person name="Sepulveda F.E."/>
            <person name="Nogee L.M."/>
            <person name="Aladjidi N."/>
            <person name="Trapnell B.C."/>
            <person name="Casanova J.L."/>
            <person name="Bustamante J."/>
        </authorList>
    </citation>
    <scope>INVOLVEMENT IN PCLUD</scope>
    <scope>VARIANTS PCLUD ARG-61; ARG-119; 214-PRO-LEU-215 DEL AND ASN-296</scope>
    <scope>FUNCTION</scope>
    <scope>SUBCELLULAR LOCATION</scope>
    <scope>TISSUE SPECIFICITY</scope>
    <scope>CHARACTERIZATION OF VARIANTS PCLUD ARG-61; ARG-119; 214-PRO-LEU-215 DEL AND ASN-296</scope>
    <scope>VARIANTS ILE-64; PHE-133; LEU-316 AND ASP-355</scope>
    <scope>CHARACTERIZATION OF VARIANTS ILE-64; PHE-133; LEU-316 AND ASP-355</scope>
</reference>
<evidence type="ECO:0000250" key="1">
    <source>
        <dbReference type="UniProtKB" id="P51683"/>
    </source>
</evidence>
<evidence type="ECO:0000255" key="2"/>
<evidence type="ECO:0000255" key="3">
    <source>
        <dbReference type="PROSITE-ProRule" id="PRU00521"/>
    </source>
</evidence>
<evidence type="ECO:0000256" key="4">
    <source>
        <dbReference type="SAM" id="MobiDB-lite"/>
    </source>
</evidence>
<evidence type="ECO:0000269" key="5">
    <source>
    </source>
</evidence>
<evidence type="ECO:0000269" key="6">
    <source>
    </source>
</evidence>
<evidence type="ECO:0000269" key="7">
    <source>
    </source>
</evidence>
<evidence type="ECO:0000269" key="8">
    <source>
    </source>
</evidence>
<evidence type="ECO:0000269" key="9">
    <source>
    </source>
</evidence>
<evidence type="ECO:0000269" key="10">
    <source>
    </source>
</evidence>
<evidence type="ECO:0000269" key="11">
    <source>
    </source>
</evidence>
<evidence type="ECO:0000269" key="12">
    <source>
    </source>
</evidence>
<evidence type="ECO:0000269" key="13">
    <source>
    </source>
</evidence>
<evidence type="ECO:0000269" key="14">
    <source>
    </source>
</evidence>
<evidence type="ECO:0000269" key="15">
    <source>
    </source>
</evidence>
<evidence type="ECO:0000269" key="16">
    <source>
    </source>
</evidence>
<evidence type="ECO:0000269" key="17">
    <source>
    </source>
</evidence>
<evidence type="ECO:0000269" key="18">
    <source>
    </source>
</evidence>
<evidence type="ECO:0000269" key="19">
    <source>
    </source>
</evidence>
<evidence type="ECO:0000269" key="20">
    <source>
    </source>
</evidence>
<evidence type="ECO:0000269" key="21">
    <source ref="4"/>
</evidence>
<evidence type="ECO:0000303" key="22">
    <source>
    </source>
</evidence>
<evidence type="ECO:0000303" key="23">
    <source>
    </source>
</evidence>
<evidence type="ECO:0000305" key="24">
    <source>
    </source>
</evidence>
<evidence type="ECO:0007829" key="25">
    <source>
        <dbReference type="PDB" id="5T1A"/>
    </source>
</evidence>
<evidence type="ECO:0007829" key="26">
    <source>
        <dbReference type="PDB" id="7XA3"/>
    </source>
</evidence>
<dbReference type="EMBL" id="U03882">
    <property type="protein sequence ID" value="AAA19119.1"/>
    <property type="molecule type" value="mRNA"/>
</dbReference>
<dbReference type="EMBL" id="U03905">
    <property type="protein sequence ID" value="AAA19120.1"/>
    <property type="molecule type" value="mRNA"/>
</dbReference>
<dbReference type="EMBL" id="D29984">
    <property type="protein sequence ID" value="BAA06253.1"/>
    <property type="molecule type" value="mRNA"/>
</dbReference>
<dbReference type="EMBL" id="U80924">
    <property type="protein sequence ID" value="AAC51637.1"/>
    <property type="molecule type" value="Genomic_DNA"/>
</dbReference>
<dbReference type="EMBL" id="U80924">
    <property type="protein sequence ID" value="AAC51636.1"/>
    <property type="molecule type" value="Genomic_DNA"/>
</dbReference>
<dbReference type="EMBL" id="AF545480">
    <property type="protein sequence ID" value="AAN16400.1"/>
    <property type="molecule type" value="Genomic_DNA"/>
</dbReference>
<dbReference type="EMBL" id="AK292685">
    <property type="protein sequence ID" value="BAF85374.1"/>
    <property type="molecule type" value="mRNA"/>
</dbReference>
<dbReference type="EMBL" id="AK292920">
    <property type="protein sequence ID" value="BAF85609.1"/>
    <property type="molecule type" value="mRNA"/>
</dbReference>
<dbReference type="EMBL" id="U95626">
    <property type="protein sequence ID" value="AAB57791.1"/>
    <property type="molecule type" value="Genomic_DNA"/>
</dbReference>
<dbReference type="EMBL" id="U95626">
    <property type="protein sequence ID" value="AAB57792.1"/>
    <property type="molecule type" value="Genomic_DNA"/>
</dbReference>
<dbReference type="EMBL" id="CH471055">
    <property type="protein sequence ID" value="EAW64760.1"/>
    <property type="molecule type" value="Genomic_DNA"/>
</dbReference>
<dbReference type="EMBL" id="BC074751">
    <property type="protein sequence ID" value="AAH74751.1"/>
    <property type="molecule type" value="mRNA"/>
</dbReference>
<dbReference type="EMBL" id="BC095540">
    <property type="protein sequence ID" value="AAH95540.1"/>
    <property type="molecule type" value="mRNA"/>
</dbReference>
<dbReference type="EMBL" id="BC126452">
    <property type="protein sequence ID" value="AAI26453.1"/>
    <property type="molecule type" value="mRNA"/>
</dbReference>
<dbReference type="EMBL" id="BC136396">
    <property type="protein sequence ID" value="AAI36397.1"/>
    <property type="molecule type" value="mRNA"/>
</dbReference>
<dbReference type="EMBL" id="X95583">
    <property type="protein sequence ID" value="CAA64835.1"/>
    <property type="molecule type" value="mRNA"/>
</dbReference>
<dbReference type="CCDS" id="CCDS43078.1">
    <molecule id="P41597-1"/>
</dbReference>
<dbReference type="CCDS" id="CCDS46813.1">
    <molecule id="P41597-2"/>
</dbReference>
<dbReference type="PIR" id="I38450">
    <property type="entry name" value="I38450"/>
</dbReference>
<dbReference type="PIR" id="JC2443">
    <property type="entry name" value="JC2443"/>
</dbReference>
<dbReference type="RefSeq" id="NP_001116513.2">
    <molecule id="P41597-1"/>
    <property type="nucleotide sequence ID" value="NM_001123041.3"/>
</dbReference>
<dbReference type="RefSeq" id="NP_001116868.1">
    <molecule id="P41597-2"/>
    <property type="nucleotide sequence ID" value="NM_001123396.4"/>
</dbReference>
<dbReference type="RefSeq" id="XP_011532371.1">
    <property type="nucleotide sequence ID" value="XM_011534069.1"/>
</dbReference>
<dbReference type="PDB" id="2MLO">
    <property type="method" value="NMR"/>
    <property type="chains" value="A=310-318"/>
</dbReference>
<dbReference type="PDB" id="2MLQ">
    <property type="method" value="NMR"/>
    <property type="chains" value="A=310-318"/>
</dbReference>
<dbReference type="PDB" id="5T1A">
    <property type="method" value="X-ray"/>
    <property type="resolution" value="2.81 A"/>
    <property type="chains" value="A=2-313"/>
</dbReference>
<dbReference type="PDB" id="7P8X">
    <property type="method" value="X-ray"/>
    <property type="resolution" value="1.40 A"/>
    <property type="chains" value="M=25-29"/>
</dbReference>
<dbReference type="PDB" id="7XA3">
    <property type="method" value="EM"/>
    <property type="resolution" value="2.90 A"/>
    <property type="chains" value="R=1-318"/>
</dbReference>
<dbReference type="PDBsum" id="2MLO"/>
<dbReference type="PDBsum" id="2MLQ"/>
<dbReference type="PDBsum" id="5T1A"/>
<dbReference type="PDBsum" id="7P8X"/>
<dbReference type="PDBsum" id="7XA3"/>
<dbReference type="EMDB" id="EMD-33086"/>
<dbReference type="SMR" id="P41597"/>
<dbReference type="BioGRID" id="609634">
    <property type="interactions" value="45"/>
</dbReference>
<dbReference type="CORUM" id="P41597"/>
<dbReference type="DIP" id="DIP-5833N"/>
<dbReference type="FunCoup" id="P41597">
    <property type="interactions" value="631"/>
</dbReference>
<dbReference type="IntAct" id="P41597">
    <property type="interactions" value="44"/>
</dbReference>
<dbReference type="MINT" id="P41597"/>
<dbReference type="STRING" id="9606.ENSP00000292301"/>
<dbReference type="BindingDB" id="P41597"/>
<dbReference type="ChEMBL" id="CHEMBL4015"/>
<dbReference type="DrugBank" id="DB16240">
    <property type="generic name" value="BMS-813160"/>
</dbReference>
<dbReference type="DrugBank" id="DB05159">
    <property type="generic name" value="CCX915"/>
</dbReference>
<dbReference type="DrugBank" id="DB11758">
    <property type="generic name" value="Cenicriviroc"/>
</dbReference>
<dbReference type="DrugBank" id="DB16066">
    <property type="generic name" value="Ilacirnon"/>
</dbReference>
<dbReference type="DrugBank" id="DB05130">
    <property type="generic name" value="INCB3284"/>
</dbReference>
<dbReference type="DrugBank" id="DB11990">
    <property type="generic name" value="MK-0812"/>
</dbReference>
<dbReference type="DrugBank" id="DB05383">
    <property type="generic name" value="Pimagedine"/>
</dbReference>
<dbReference type="DrugBank" id="DB12520">
    <property type="generic name" value="Plozalizumab"/>
</dbReference>
<dbReference type="DrugCentral" id="P41597"/>
<dbReference type="GuidetoPHARMACOLOGY" id="59"/>
<dbReference type="GlyCosmos" id="P41597">
    <property type="glycosylation" value="1 site, No reported glycans"/>
</dbReference>
<dbReference type="GlyGen" id="P41597">
    <property type="glycosylation" value="1 site"/>
</dbReference>
<dbReference type="iPTMnet" id="P41597"/>
<dbReference type="PhosphoSitePlus" id="P41597"/>
<dbReference type="BioMuta" id="CCR2"/>
<dbReference type="DMDM" id="1168965"/>
<dbReference type="MassIVE" id="P41597"/>
<dbReference type="PaxDb" id="9606-ENSP00000292301"/>
<dbReference type="PeptideAtlas" id="P41597"/>
<dbReference type="ProteomicsDB" id="55474">
    <molecule id="P41597-1"/>
</dbReference>
<dbReference type="ProteomicsDB" id="55475">
    <molecule id="P41597-2"/>
</dbReference>
<dbReference type="ABCD" id="P41597">
    <property type="antibodies" value="7 sequenced antibodies"/>
</dbReference>
<dbReference type="Antibodypedia" id="29661">
    <property type="antibodies" value="932 antibodies from 42 providers"/>
</dbReference>
<dbReference type="DNASU" id="729230"/>
<dbReference type="Ensembl" id="ENST00000400888.2">
    <molecule id="P41597-1"/>
    <property type="protein sequence ID" value="ENSP00000383681.2"/>
    <property type="gene ID" value="ENSG00000121807.7"/>
</dbReference>
<dbReference type="Ensembl" id="ENST00000445132.3">
    <molecule id="P41597-2"/>
    <property type="protein sequence ID" value="ENSP00000399285.2"/>
    <property type="gene ID" value="ENSG00000121807.7"/>
</dbReference>
<dbReference type="GeneID" id="729230"/>
<dbReference type="KEGG" id="hsa:729230"/>
<dbReference type="MANE-Select" id="ENST00000445132.3">
    <molecule id="P41597-2"/>
    <property type="protein sequence ID" value="ENSP00000399285.2"/>
    <property type="RefSeq nucleotide sequence ID" value="NM_001123396.4"/>
    <property type="RefSeq protein sequence ID" value="NP_001116868.1"/>
</dbReference>
<dbReference type="UCSC" id="uc003cpm.5">
    <molecule id="P41597-1"/>
    <property type="organism name" value="human"/>
</dbReference>
<dbReference type="AGR" id="HGNC:1603"/>
<dbReference type="CTD" id="729230"/>
<dbReference type="DisGeNET" id="729230"/>
<dbReference type="GeneCards" id="CCR2"/>
<dbReference type="HGNC" id="HGNC:1603">
    <property type="gene designation" value="CCR2"/>
</dbReference>
<dbReference type="HPA" id="ENSG00000121807">
    <property type="expression patterns" value="Tissue enhanced (lymphoid)"/>
</dbReference>
<dbReference type="MalaCards" id="CCR2"/>
<dbReference type="MIM" id="219600">
    <property type="type" value="phenotype"/>
</dbReference>
<dbReference type="MIM" id="601267">
    <property type="type" value="gene"/>
</dbReference>
<dbReference type="MIM" id="609423">
    <property type="type" value="phenotype"/>
</dbReference>
<dbReference type="neXtProt" id="NX_P41597"/>
<dbReference type="OpenTargets" id="ENSG00000121807"/>
<dbReference type="PharmGKB" id="PA26167"/>
<dbReference type="VEuPathDB" id="HostDB:ENSG00000121807"/>
<dbReference type="eggNOG" id="KOG3656">
    <property type="taxonomic scope" value="Eukaryota"/>
</dbReference>
<dbReference type="GeneTree" id="ENSGT01020000230359"/>
<dbReference type="HOGENOM" id="CLU_009579_8_3_1"/>
<dbReference type="InParanoid" id="P41597"/>
<dbReference type="OMA" id="YHIALGC"/>
<dbReference type="OrthoDB" id="9876908at2759"/>
<dbReference type="PAN-GO" id="P41597">
    <property type="GO annotations" value="9 GO annotations based on evolutionary models"/>
</dbReference>
<dbReference type="PhylomeDB" id="P41597"/>
<dbReference type="TreeFam" id="TF330966"/>
<dbReference type="PathwayCommons" id="P41597"/>
<dbReference type="Reactome" id="R-HSA-1461957">
    <property type="pathway name" value="Beta defensins"/>
</dbReference>
<dbReference type="Reactome" id="R-HSA-380108">
    <property type="pathway name" value="Chemokine receptors bind chemokines"/>
</dbReference>
<dbReference type="Reactome" id="R-HSA-418594">
    <property type="pathway name" value="G alpha (i) signalling events"/>
</dbReference>
<dbReference type="Reactome" id="R-HSA-6783783">
    <property type="pathway name" value="Interleukin-10 signaling"/>
</dbReference>
<dbReference type="SignaLink" id="P41597"/>
<dbReference type="SIGNOR" id="P41597"/>
<dbReference type="BioGRID-ORCS" id="729230">
    <property type="hits" value="10 hits in 1144 CRISPR screens"/>
</dbReference>
<dbReference type="EvolutionaryTrace" id="P41597"/>
<dbReference type="GeneWiki" id="CCR2"/>
<dbReference type="GenomeRNAi" id="729230"/>
<dbReference type="Pharos" id="P41597">
    <property type="development level" value="Tchem"/>
</dbReference>
<dbReference type="PRO" id="PR:P41597"/>
<dbReference type="Proteomes" id="UP000005640">
    <property type="component" value="Chromosome 3"/>
</dbReference>
<dbReference type="RNAct" id="P41597">
    <property type="molecule type" value="protein"/>
</dbReference>
<dbReference type="Bgee" id="ENSG00000121807">
    <property type="expression patterns" value="Expressed in monocyte and 101 other cell types or tissues"/>
</dbReference>
<dbReference type="ExpressionAtlas" id="P41597">
    <property type="expression patterns" value="baseline and differential"/>
</dbReference>
<dbReference type="GO" id="GO:0005737">
    <property type="term" value="C:cytoplasm"/>
    <property type="evidence" value="ECO:0000314"/>
    <property type="project" value="MGI"/>
</dbReference>
<dbReference type="GO" id="GO:0030425">
    <property type="term" value="C:dendrite"/>
    <property type="evidence" value="ECO:0000250"/>
    <property type="project" value="BHF-UCL"/>
</dbReference>
<dbReference type="GO" id="GO:0009897">
    <property type="term" value="C:external side of plasma membrane"/>
    <property type="evidence" value="ECO:0000318"/>
    <property type="project" value="GO_Central"/>
</dbReference>
<dbReference type="GO" id="GO:0001650">
    <property type="term" value="C:fibrillar center"/>
    <property type="evidence" value="ECO:0000314"/>
    <property type="project" value="HPA"/>
</dbReference>
<dbReference type="GO" id="GO:0016020">
    <property type="term" value="C:membrane"/>
    <property type="evidence" value="ECO:0000304"/>
    <property type="project" value="ProtInc"/>
</dbReference>
<dbReference type="GO" id="GO:0043025">
    <property type="term" value="C:neuronal cell body"/>
    <property type="evidence" value="ECO:0000250"/>
    <property type="project" value="BHF-UCL"/>
</dbReference>
<dbReference type="GO" id="GO:0043204">
    <property type="term" value="C:perikaryon"/>
    <property type="evidence" value="ECO:0000250"/>
    <property type="project" value="BHF-UCL"/>
</dbReference>
<dbReference type="GO" id="GO:0048471">
    <property type="term" value="C:perinuclear region of cytoplasm"/>
    <property type="evidence" value="ECO:0000250"/>
    <property type="project" value="BHF-UCL"/>
</dbReference>
<dbReference type="GO" id="GO:0005886">
    <property type="term" value="C:plasma membrane"/>
    <property type="evidence" value="ECO:0000314"/>
    <property type="project" value="HPA"/>
</dbReference>
<dbReference type="GO" id="GO:0019957">
    <property type="term" value="F:C-C chemokine binding"/>
    <property type="evidence" value="ECO:0000318"/>
    <property type="project" value="GO_Central"/>
</dbReference>
<dbReference type="GO" id="GO:0016493">
    <property type="term" value="F:C-C chemokine receptor activity"/>
    <property type="evidence" value="ECO:0000318"/>
    <property type="project" value="GO_Central"/>
</dbReference>
<dbReference type="GO" id="GO:0031727">
    <property type="term" value="F:CCR2 chemokine receptor binding"/>
    <property type="evidence" value="ECO:0000314"/>
    <property type="project" value="MGI"/>
</dbReference>
<dbReference type="GO" id="GO:0035716">
    <property type="term" value="F:chemokine (C-C motif) ligand 12 binding"/>
    <property type="evidence" value="ECO:0007669"/>
    <property type="project" value="Ensembl"/>
</dbReference>
<dbReference type="GO" id="GO:0035715">
    <property type="term" value="F:chemokine (C-C motif) ligand 2 binding"/>
    <property type="evidence" value="ECO:0007669"/>
    <property type="project" value="Ensembl"/>
</dbReference>
<dbReference type="GO" id="GO:0035717">
    <property type="term" value="F:chemokine (C-C motif) ligand 7 binding"/>
    <property type="evidence" value="ECO:0007669"/>
    <property type="project" value="Ensembl"/>
</dbReference>
<dbReference type="GO" id="GO:0004950">
    <property type="term" value="F:chemokine receptor activity"/>
    <property type="evidence" value="ECO:0000304"/>
    <property type="project" value="ProtInc"/>
</dbReference>
<dbReference type="GO" id="GO:0042802">
    <property type="term" value="F:identical protein binding"/>
    <property type="evidence" value="ECO:0000250"/>
    <property type="project" value="BHF-UCL"/>
</dbReference>
<dbReference type="GO" id="GO:0001974">
    <property type="term" value="P:blood vessel remodeling"/>
    <property type="evidence" value="ECO:0000250"/>
    <property type="project" value="BHF-UCL"/>
</dbReference>
<dbReference type="GO" id="GO:0019722">
    <property type="term" value="P:calcium-mediated signaling"/>
    <property type="evidence" value="ECO:0000318"/>
    <property type="project" value="GO_Central"/>
</dbReference>
<dbReference type="GO" id="GO:0060326">
    <property type="term" value="P:cell chemotaxis"/>
    <property type="evidence" value="ECO:0000318"/>
    <property type="project" value="GO_Central"/>
</dbReference>
<dbReference type="GO" id="GO:0007259">
    <property type="term" value="P:cell surface receptor signaling pathway via JAK-STAT"/>
    <property type="evidence" value="ECO:0000304"/>
    <property type="project" value="ProtInc"/>
</dbReference>
<dbReference type="GO" id="GO:0006968">
    <property type="term" value="P:cellular defense response"/>
    <property type="evidence" value="ECO:0000304"/>
    <property type="project" value="ProtInc"/>
</dbReference>
<dbReference type="GO" id="GO:0019725">
    <property type="term" value="P:cellular homeostasis"/>
    <property type="evidence" value="ECO:0000250"/>
    <property type="project" value="BHF-UCL"/>
</dbReference>
<dbReference type="GO" id="GO:0070098">
    <property type="term" value="P:chemokine-mediated signaling pathway"/>
    <property type="evidence" value="ECO:0000250"/>
    <property type="project" value="BHF-UCL"/>
</dbReference>
<dbReference type="GO" id="GO:0006935">
    <property type="term" value="P:chemotaxis"/>
    <property type="evidence" value="ECO:0000304"/>
    <property type="project" value="ProtInc"/>
</dbReference>
<dbReference type="GO" id="GO:0019221">
    <property type="term" value="P:cytokine-mediated signaling pathway"/>
    <property type="evidence" value="ECO:0000314"/>
    <property type="project" value="MGI"/>
</dbReference>
<dbReference type="GO" id="GO:0002407">
    <property type="term" value="P:dendritic cell chemotaxis"/>
    <property type="evidence" value="ECO:0000304"/>
    <property type="project" value="BHF-UCL"/>
</dbReference>
<dbReference type="GO" id="GO:0030097">
    <property type="term" value="P:hemopoiesis"/>
    <property type="evidence" value="ECO:0007669"/>
    <property type="project" value="Ensembl"/>
</dbReference>
<dbReference type="GO" id="GO:0048873">
    <property type="term" value="P:homeostasis of number of cells within a tissue"/>
    <property type="evidence" value="ECO:0007669"/>
    <property type="project" value="Ensembl"/>
</dbReference>
<dbReference type="GO" id="GO:0006959">
    <property type="term" value="P:humoral immune response"/>
    <property type="evidence" value="ECO:0007669"/>
    <property type="project" value="Ensembl"/>
</dbReference>
<dbReference type="GO" id="GO:0006955">
    <property type="term" value="P:immune response"/>
    <property type="evidence" value="ECO:0000318"/>
    <property type="project" value="GO_Central"/>
</dbReference>
<dbReference type="GO" id="GO:0006954">
    <property type="term" value="P:inflammatory response"/>
    <property type="evidence" value="ECO:0000318"/>
    <property type="project" value="GO_Central"/>
</dbReference>
<dbReference type="GO" id="GO:0090594">
    <property type="term" value="P:inflammatory response to wounding"/>
    <property type="evidence" value="ECO:0000250"/>
    <property type="project" value="UniProtKB"/>
</dbReference>
<dbReference type="GO" id="GO:0006874">
    <property type="term" value="P:intracellular calcium ion homeostasis"/>
    <property type="evidence" value="ECO:0000250"/>
    <property type="project" value="BHF-UCL"/>
</dbReference>
<dbReference type="GO" id="GO:0061756">
    <property type="term" value="P:leukocyte adhesion to vascular endothelial cell"/>
    <property type="evidence" value="ECO:0007669"/>
    <property type="project" value="Ensembl"/>
</dbReference>
<dbReference type="GO" id="GO:1905517">
    <property type="term" value="P:macrophage migration"/>
    <property type="evidence" value="ECO:0000250"/>
    <property type="project" value="UniProtKB"/>
</dbReference>
<dbReference type="GO" id="GO:0002548">
    <property type="term" value="P:monocyte chemotaxis"/>
    <property type="evidence" value="ECO:0007669"/>
    <property type="project" value="Ensembl"/>
</dbReference>
<dbReference type="GO" id="GO:0035696">
    <property type="term" value="P:monocyte extravasation"/>
    <property type="evidence" value="ECO:0000250"/>
    <property type="project" value="UniProtKB"/>
</dbReference>
<dbReference type="GO" id="GO:0007194">
    <property type="term" value="P:negative regulation of adenylate cyclase activity"/>
    <property type="evidence" value="ECO:0000304"/>
    <property type="project" value="ProtInc"/>
</dbReference>
<dbReference type="GO" id="GO:0016525">
    <property type="term" value="P:negative regulation of angiogenesis"/>
    <property type="evidence" value="ECO:0000250"/>
    <property type="project" value="BHF-UCL"/>
</dbReference>
<dbReference type="GO" id="GO:0043310">
    <property type="term" value="P:negative regulation of eosinophil degranulation"/>
    <property type="evidence" value="ECO:0000250"/>
    <property type="project" value="BHF-UCL"/>
</dbReference>
<dbReference type="GO" id="GO:0002829">
    <property type="term" value="P:negative regulation of type 2 immune response"/>
    <property type="evidence" value="ECO:0000250"/>
    <property type="project" value="BHF-UCL"/>
</dbReference>
<dbReference type="GO" id="GO:0097350">
    <property type="term" value="P:neutrophil clearance"/>
    <property type="evidence" value="ECO:0007669"/>
    <property type="project" value="Ensembl"/>
</dbReference>
<dbReference type="GO" id="GO:0046641">
    <property type="term" value="P:positive regulation of alpha-beta T cell proliferation"/>
    <property type="evidence" value="ECO:0000250"/>
    <property type="project" value="BHF-UCL"/>
</dbReference>
<dbReference type="GO" id="GO:2000464">
    <property type="term" value="P:positive regulation of astrocyte chemotaxis"/>
    <property type="evidence" value="ECO:0000314"/>
    <property type="project" value="BHF-UCL"/>
</dbReference>
<dbReference type="GO" id="GO:2000451">
    <property type="term" value="P:positive regulation of CD8-positive, alpha-beta T cell extravasation"/>
    <property type="evidence" value="ECO:0000250"/>
    <property type="project" value="BHF-UCL"/>
</dbReference>
<dbReference type="GO" id="GO:0120162">
    <property type="term" value="P:positive regulation of cold-induced thermogenesis"/>
    <property type="evidence" value="ECO:0000250"/>
    <property type="project" value="YuBioLab"/>
</dbReference>
<dbReference type="GO" id="GO:0007204">
    <property type="term" value="P:positive regulation of cytosolic calcium ion concentration"/>
    <property type="evidence" value="ECO:0000318"/>
    <property type="project" value="GO_Central"/>
</dbReference>
<dbReference type="GO" id="GO:1900451">
    <property type="term" value="P:positive regulation of glutamate receptor signaling pathway"/>
    <property type="evidence" value="ECO:0000250"/>
    <property type="project" value="ARUK-UCL"/>
</dbReference>
<dbReference type="GO" id="GO:2000473">
    <property type="term" value="P:positive regulation of hematopoietic stem cell migration"/>
    <property type="evidence" value="ECO:0000250"/>
    <property type="project" value="BHF-UCL"/>
</dbReference>
<dbReference type="GO" id="GO:0090265">
    <property type="term" value="P:positive regulation of immune complex clearance by monocytes and macrophages"/>
    <property type="evidence" value="ECO:0000250"/>
    <property type="project" value="BHF-UCL"/>
</dbReference>
<dbReference type="GO" id="GO:0050729">
    <property type="term" value="P:positive regulation of inflammatory response"/>
    <property type="evidence" value="ECO:0000250"/>
    <property type="project" value="BHF-UCL"/>
</dbReference>
<dbReference type="GO" id="GO:0032743">
    <property type="term" value="P:positive regulation of interleukin-2 production"/>
    <property type="evidence" value="ECO:0000250"/>
    <property type="project" value="BHF-UCL"/>
</dbReference>
<dbReference type="GO" id="GO:1903238">
    <property type="term" value="P:positive regulation of leukocyte tethering or rolling"/>
    <property type="evidence" value="ECO:0007669"/>
    <property type="project" value="Ensembl"/>
</dbReference>
<dbReference type="GO" id="GO:0090026">
    <property type="term" value="P:positive regulation of monocyte chemotaxis"/>
    <property type="evidence" value="ECO:0000314"/>
    <property type="project" value="UniProtKB"/>
</dbReference>
<dbReference type="GO" id="GO:2000439">
    <property type="term" value="P:positive regulation of monocyte extravasation"/>
    <property type="evidence" value="ECO:0000250"/>
    <property type="project" value="BHF-UCL"/>
</dbReference>
<dbReference type="GO" id="GO:0051968">
    <property type="term" value="P:positive regulation of synaptic transmission, glutamatergic"/>
    <property type="evidence" value="ECO:0000250"/>
    <property type="project" value="UniProtKB"/>
</dbReference>
<dbReference type="GO" id="GO:0050870">
    <property type="term" value="P:positive regulation of T cell activation"/>
    <property type="evidence" value="ECO:0000250"/>
    <property type="project" value="BHF-UCL"/>
</dbReference>
<dbReference type="GO" id="GO:0010820">
    <property type="term" value="P:positive regulation of T cell chemotaxis"/>
    <property type="evidence" value="ECO:0000250"/>
    <property type="project" value="BHF-UCL"/>
</dbReference>
<dbReference type="GO" id="GO:0002827">
    <property type="term" value="P:positive regulation of T-helper 1 type immune response"/>
    <property type="evidence" value="ECO:0000250"/>
    <property type="project" value="BHF-UCL"/>
</dbReference>
<dbReference type="GO" id="GO:2000412">
    <property type="term" value="P:positive regulation of thymocyte migration"/>
    <property type="evidence" value="ECO:0000250"/>
    <property type="project" value="UniProtKB"/>
</dbReference>
<dbReference type="GO" id="GO:0032760">
    <property type="term" value="P:positive regulation of tumor necrosis factor production"/>
    <property type="evidence" value="ECO:0000250"/>
    <property type="project" value="BHF-UCL"/>
</dbReference>
<dbReference type="GO" id="GO:0032729">
    <property type="term" value="P:positive regulation of type II interferon production"/>
    <property type="evidence" value="ECO:0000250"/>
    <property type="project" value="BHF-UCL"/>
</dbReference>
<dbReference type="GO" id="GO:0050727">
    <property type="term" value="P:regulation of inflammatory response"/>
    <property type="evidence" value="ECO:0000250"/>
    <property type="project" value="UniProtKB"/>
</dbReference>
<dbReference type="GO" id="GO:1905521">
    <property type="term" value="P:regulation of macrophage migration"/>
    <property type="evidence" value="ECO:0007669"/>
    <property type="project" value="Ensembl"/>
</dbReference>
<dbReference type="GO" id="GO:0002724">
    <property type="term" value="P:regulation of T cell cytokine production"/>
    <property type="evidence" value="ECO:0000250"/>
    <property type="project" value="UniProtKB"/>
</dbReference>
<dbReference type="GO" id="GO:0045580">
    <property type="term" value="P:regulation of T cell differentiation"/>
    <property type="evidence" value="ECO:0000250"/>
    <property type="project" value="UniProtKB"/>
</dbReference>
<dbReference type="GO" id="GO:0010574">
    <property type="term" value="P:regulation of vascular endothelial growth factor production"/>
    <property type="evidence" value="ECO:0000250"/>
    <property type="project" value="BHF-UCL"/>
</dbReference>
<dbReference type="GO" id="GO:0009611">
    <property type="term" value="P:response to wounding"/>
    <property type="evidence" value="ECO:0000304"/>
    <property type="project" value="ProtInc"/>
</dbReference>
<dbReference type="GO" id="GO:0019233">
    <property type="term" value="P:sensory perception of pain"/>
    <property type="evidence" value="ECO:0000250"/>
    <property type="project" value="UniProtKB"/>
</dbReference>
<dbReference type="GO" id="GO:0035705">
    <property type="term" value="P:T-helper 17 cell chemotaxis"/>
    <property type="evidence" value="ECO:0000250"/>
    <property type="project" value="BHF-UCL"/>
</dbReference>
<dbReference type="CDD" id="cd15184">
    <property type="entry name" value="7tmA_CCR5_CCR2"/>
    <property type="match status" value="1"/>
</dbReference>
<dbReference type="FunFam" id="1.20.1070.10:FF:000026">
    <property type="entry name" value="C-C chemokine receptor type 5"/>
    <property type="match status" value="1"/>
</dbReference>
<dbReference type="Gene3D" id="1.20.1070.10">
    <property type="entry name" value="Rhodopsin 7-helix transmembrane proteins"/>
    <property type="match status" value="1"/>
</dbReference>
<dbReference type="InterPro" id="IPR050119">
    <property type="entry name" value="CCR1-9-like"/>
</dbReference>
<dbReference type="InterPro" id="IPR002237">
    <property type="entry name" value="Chemokine_CCR2"/>
</dbReference>
<dbReference type="InterPro" id="IPR000355">
    <property type="entry name" value="Chemokine_rcpt"/>
</dbReference>
<dbReference type="InterPro" id="IPR000276">
    <property type="entry name" value="GPCR_Rhodpsn"/>
</dbReference>
<dbReference type="InterPro" id="IPR017452">
    <property type="entry name" value="GPCR_Rhodpsn_7TM"/>
</dbReference>
<dbReference type="PANTHER" id="PTHR10489:SF913">
    <property type="entry name" value="C-C CHEMOKINE RECEPTOR TYPE 2"/>
    <property type="match status" value="1"/>
</dbReference>
<dbReference type="PANTHER" id="PTHR10489">
    <property type="entry name" value="CELL ADHESION MOLECULE"/>
    <property type="match status" value="1"/>
</dbReference>
<dbReference type="Pfam" id="PF00001">
    <property type="entry name" value="7tm_1"/>
    <property type="match status" value="1"/>
</dbReference>
<dbReference type="PRINTS" id="PR00657">
    <property type="entry name" value="CCCHEMOKINER"/>
</dbReference>
<dbReference type="PRINTS" id="PR01107">
    <property type="entry name" value="CHEMOKINER2"/>
</dbReference>
<dbReference type="PRINTS" id="PR00237">
    <property type="entry name" value="GPCRRHODOPSN"/>
</dbReference>
<dbReference type="SMART" id="SM01381">
    <property type="entry name" value="7TM_GPCR_Srsx"/>
    <property type="match status" value="1"/>
</dbReference>
<dbReference type="SUPFAM" id="SSF81321">
    <property type="entry name" value="Family A G protein-coupled receptor-like"/>
    <property type="match status" value="1"/>
</dbReference>
<dbReference type="PROSITE" id="PS00237">
    <property type="entry name" value="G_PROTEIN_RECEP_F1_1"/>
    <property type="match status" value="1"/>
</dbReference>
<dbReference type="PROSITE" id="PS50262">
    <property type="entry name" value="G_PROTEIN_RECEP_F1_2"/>
    <property type="match status" value="1"/>
</dbReference>